<comment type="function">
    <text evidence="1">Involved in protein export. Acts as a chaperone by maintaining the newly synthesized protein in an open conformation. Functions as a peptidyl-prolyl cis-trans isomerase (By similarity). Probably changes conformation upon binding to the ribosome (maybe in particular due to interaction with L24), exposing a hydrophobic crevice that is probably important for its chaperone activity (PubMed:16091460, PubMed:16271892).</text>
</comment>
<comment type="catalytic activity">
    <reaction>
        <text>[protein]-peptidylproline (omega=180) = [protein]-peptidylproline (omega=0)</text>
        <dbReference type="Rhea" id="RHEA:16237"/>
        <dbReference type="Rhea" id="RHEA-COMP:10747"/>
        <dbReference type="Rhea" id="RHEA-COMP:10748"/>
        <dbReference type="ChEBI" id="CHEBI:83833"/>
        <dbReference type="ChEBI" id="CHEBI:83834"/>
        <dbReference type="EC" id="5.2.1.8"/>
    </reaction>
</comment>
<comment type="subunit">
    <text evidence="4 5">Binds to the 50S ribosomal subunit via interactions with ribosomal protein L23. Also interacts with 23S rRNA and proteins L24 and L29 when complexed with the ribosome (PubMed:16091460, PubMed:16271892).</text>
</comment>
<comment type="subcellular location">
    <subcellularLocation>
        <location>Cytoplasm</location>
    </subcellularLocation>
    <text evidence="1">About half TF is bound to the ribosome near the polypeptide exit tunnel while the other half is free in the cytoplasm.</text>
</comment>
<comment type="domain">
    <text evidence="1">Consists of 3 domains; the N-terminus binds the ribosome, the middle domain has PPIase activity, while the C-terminus has intrinsic chaperone activity on its own.</text>
</comment>
<comment type="similarity">
    <text evidence="6">Belongs to the FKBP-type PPIase family. Tig subfamily.</text>
</comment>
<feature type="initiator methionine" description="Removed" evidence="3">
    <location>
        <position position="1"/>
    </location>
</feature>
<feature type="chain" id="PRO_0000179344" description="Trigger factor">
    <location>
        <begin position="2"/>
        <end position="465"/>
    </location>
</feature>
<feature type="domain" description="PPIase FKBP-type">
    <location>
        <begin position="160"/>
        <end position="235"/>
    </location>
</feature>
<feature type="region of interest" description="Disordered" evidence="2">
    <location>
        <begin position="412"/>
        <end position="465"/>
    </location>
</feature>
<feature type="compositionally biased region" description="Polar residues" evidence="2">
    <location>
        <begin position="435"/>
        <end position="465"/>
    </location>
</feature>
<feature type="strand" evidence="7">
    <location>
        <begin position="12"/>
        <end position="16"/>
    </location>
</feature>
<feature type="helix" evidence="7">
    <location>
        <begin position="20"/>
        <end position="22"/>
    </location>
</feature>
<feature type="helix" evidence="7">
    <location>
        <begin position="24"/>
        <end position="35"/>
    </location>
</feature>
<feature type="helix" evidence="7">
    <location>
        <begin position="53"/>
        <end position="56"/>
    </location>
</feature>
<feature type="turn" evidence="7">
    <location>
        <begin position="57"/>
        <end position="60"/>
    </location>
</feature>
<feature type="helix" evidence="7">
    <location>
        <begin position="63"/>
        <end position="81"/>
    </location>
</feature>
<feature type="strand" evidence="7">
    <location>
        <begin position="98"/>
        <end position="100"/>
    </location>
</feature>
<feature type="strand" evidence="7">
    <location>
        <begin position="104"/>
        <end position="108"/>
    </location>
</feature>
<proteinExistence type="evidence at protein level"/>
<sequence length="465" mass="51847">MAELISKEGNKVEFKVSVPAAEVNRAYDQVWAGLARDVRVPGFRPGKAPRKVIENRVGKGYVESQVRDRLLETHYSQGLRELGLNLVDATVDPQDVQSGQAFEFTVKGETYPEVKLGDWQGLKVSAQAPEITDEVLEQTLSDLRERNASFEKAERPIEAADQVTIQELGEGDSEEGGSYPIYLDMAEEHVRNALLGKSAGDVVDITVPAHQHGDHEHAEHTVRVKVVEVSSKKLQDLNDEFATSLNYESMDKLRTDLREELERRAQQEGDNLRREELVGHLVEGMTVEIPQALIDRRREGMMSEIQDDLRRQGVQWKEYEAFMQEQGKLDEFEADLTKNAETRVRRDLALEQLATDLNAQVNEAEFNQTLMNLAQANGMNVQQLVQQLGQDGVQSYYISLLRERGLQRALAQLSGEGQSTEAASPKATGTEAAGTEQSEPAQTETAQNDAGQTETAQSEGEQQSE</sequence>
<evidence type="ECO:0000250" key="1"/>
<evidence type="ECO:0000256" key="2">
    <source>
        <dbReference type="SAM" id="MobiDB-lite"/>
    </source>
</evidence>
<evidence type="ECO:0000269" key="3">
    <source>
    </source>
</evidence>
<evidence type="ECO:0000269" key="4">
    <source>
    </source>
</evidence>
<evidence type="ECO:0000269" key="5">
    <source>
    </source>
</evidence>
<evidence type="ECO:0000305" key="6"/>
<evidence type="ECO:0007829" key="7">
    <source>
        <dbReference type="PDB" id="2D3O"/>
    </source>
</evidence>
<protein>
    <recommendedName>
        <fullName>Trigger factor</fullName>
        <shortName>TF</shortName>
        <ecNumber>5.2.1.8</ecNumber>
    </recommendedName>
    <alternativeName>
        <fullName>PPIase</fullName>
    </alternativeName>
</protein>
<keyword id="KW-0002">3D-structure</keyword>
<keyword id="KW-0131">Cell cycle</keyword>
<keyword id="KW-0132">Cell division</keyword>
<keyword id="KW-0143">Chaperone</keyword>
<keyword id="KW-0963">Cytoplasm</keyword>
<keyword id="KW-0903">Direct protein sequencing</keyword>
<keyword id="KW-0413">Isomerase</keyword>
<keyword id="KW-1185">Reference proteome</keyword>
<keyword id="KW-0694">RNA-binding</keyword>
<keyword id="KW-0697">Rotamase</keyword>
<keyword id="KW-0699">rRNA-binding</keyword>
<name>TIG_DEIRA</name>
<accession>Q9RT21</accession>
<gene>
    <name type="primary">tig</name>
    <name type="ordered locus">DR_1948</name>
</gene>
<organism>
    <name type="scientific">Deinococcus radiodurans (strain ATCC 13939 / DSM 20539 / JCM 16871 / CCUG 27074 / LMG 4051 / NBRC 15346 / NCIMB 9279 / VKM B-1422 / R1)</name>
    <dbReference type="NCBI Taxonomy" id="243230"/>
    <lineage>
        <taxon>Bacteria</taxon>
        <taxon>Thermotogati</taxon>
        <taxon>Deinococcota</taxon>
        <taxon>Deinococci</taxon>
        <taxon>Deinococcales</taxon>
        <taxon>Deinococcaceae</taxon>
        <taxon>Deinococcus</taxon>
    </lineage>
</organism>
<reference key="1">
    <citation type="journal article" date="1999" name="Science">
        <title>Genome sequence of the radioresistant bacterium Deinococcus radiodurans R1.</title>
        <authorList>
            <person name="White O."/>
            <person name="Eisen J.A."/>
            <person name="Heidelberg J.F."/>
            <person name="Hickey E.K."/>
            <person name="Peterson J.D."/>
            <person name="Dodson R.J."/>
            <person name="Haft D.H."/>
            <person name="Gwinn M.L."/>
            <person name="Nelson W.C."/>
            <person name="Richardson D.L."/>
            <person name="Moffat K.S."/>
            <person name="Qin H."/>
            <person name="Jiang L."/>
            <person name="Pamphile W."/>
            <person name="Crosby M."/>
            <person name="Shen M."/>
            <person name="Vamathevan J.J."/>
            <person name="Lam P."/>
            <person name="McDonald L.A."/>
            <person name="Utterback T.R."/>
            <person name="Zalewski C."/>
            <person name="Makarova K.S."/>
            <person name="Aravind L."/>
            <person name="Daly M.J."/>
            <person name="Minton K.W."/>
            <person name="Fleischmann R.D."/>
            <person name="Ketchum K.A."/>
            <person name="Nelson K.E."/>
            <person name="Salzberg S.L."/>
            <person name="Smith H.O."/>
            <person name="Venter J.C."/>
            <person name="Fraser C.M."/>
        </authorList>
    </citation>
    <scope>NUCLEOTIDE SEQUENCE [LARGE SCALE GENOMIC DNA]</scope>
    <source>
        <strain>ATCC 13939 / DSM 20539 / JCM 16871 / CCUG 27074 / LMG 4051 / NBRC 15346 / NCIMB 9279 / VKM B-1422 / R1</strain>
    </source>
</reference>
<reference key="2">
    <citation type="journal article" date="2004" name="Biochem. Biophys. Res. Commun.">
        <title>Protein recycling is a major component of post-irradiation recovery in Deinococcus radiodurans strain R1.</title>
        <authorList>
            <person name="Joshi B.S."/>
            <person name="Schmid R."/>
            <person name="Altendorf K."/>
            <person name="Apte S.K."/>
        </authorList>
    </citation>
    <scope>PROTEIN SEQUENCE OF 2-16</scope>
    <source>
        <strain>ATCC 13939 / DSM 20539 / JCM 16871 / CCUG 27074 / LMG 4051 / NBRC 15346 / NCIMB 9279 / VKM B-1422 / R1</strain>
    </source>
</reference>
<reference key="3">
    <citation type="journal article" date="2005" name="Proc. Natl. Acad. Sci. U.S.A.">
        <title>Structure of trigger factor binding domain in biologically homologous complex with eubacterial ribosome reveals its chaperone action.</title>
        <authorList>
            <person name="Baram D."/>
            <person name="Pyetan E."/>
            <person name="Sittner A."/>
            <person name="Auerbach-Nevo T."/>
            <person name="Bashan A."/>
            <person name="Yonath A."/>
        </authorList>
    </citation>
    <scope>X-RAY CRYSTALLOGRAPHY (3.5 ANGSTROMS) OF 1-114 IN COMPLEX WITH THE 50S RIBOSOMAL SUBUNIT</scope>
</reference>
<reference key="4">
    <citation type="journal article" date="2005" name="Structure">
        <title>The binding mode of the trigger factor on the ribosome: implications for protein folding and SRP interaction.</title>
        <authorList>
            <person name="Schluenzen F."/>
            <person name="Wilson D.N."/>
            <person name="Tian P."/>
            <person name="Harms J.M."/>
            <person name="McInnes S.J."/>
            <person name="Hansen H.A.S."/>
            <person name="Albrecht R."/>
            <person name="Buerger J."/>
            <person name="Wilbanks S.M."/>
            <person name="Fucini P."/>
        </authorList>
    </citation>
    <scope>X-RAY CRYSTALLOGRAPHY (3.35 ANGSTROMS) OF 1-112 IN COMPLEX WITH THE 50S RIBOSOMAL SUBUNIT</scope>
</reference>
<dbReference type="EC" id="5.2.1.8"/>
<dbReference type="EMBL" id="AE000513">
    <property type="protein sequence ID" value="AAF11500.1"/>
    <property type="molecule type" value="Genomic_DNA"/>
</dbReference>
<dbReference type="PIR" id="D75334">
    <property type="entry name" value="D75334"/>
</dbReference>
<dbReference type="RefSeq" id="NP_295671.1">
    <property type="nucleotide sequence ID" value="NC_001263.1"/>
</dbReference>
<dbReference type="RefSeq" id="WP_010888581.1">
    <property type="nucleotide sequence ID" value="NC_001263.1"/>
</dbReference>
<dbReference type="PDB" id="2AAR">
    <property type="method" value="X-ray"/>
    <property type="resolution" value="3.50 A"/>
    <property type="chains" value="7=2-114"/>
</dbReference>
<dbReference type="PDB" id="2D3O">
    <property type="method" value="X-ray"/>
    <property type="resolution" value="3.35 A"/>
    <property type="chains" value="1=1-112"/>
</dbReference>
<dbReference type="PDBsum" id="2AAR"/>
<dbReference type="PDBsum" id="2D3O"/>
<dbReference type="SMR" id="Q9RT21"/>
<dbReference type="FunCoup" id="Q9RT21">
    <property type="interactions" value="490"/>
</dbReference>
<dbReference type="STRING" id="243230.DR_1948"/>
<dbReference type="PaxDb" id="243230-DR_1948"/>
<dbReference type="EnsemblBacteria" id="AAF11500">
    <property type="protein sequence ID" value="AAF11500"/>
    <property type="gene ID" value="DR_1948"/>
</dbReference>
<dbReference type="GeneID" id="69518184"/>
<dbReference type="KEGG" id="dra:DR_1948"/>
<dbReference type="PATRIC" id="fig|243230.17.peg.2168"/>
<dbReference type="eggNOG" id="COG0544">
    <property type="taxonomic scope" value="Bacteria"/>
</dbReference>
<dbReference type="HOGENOM" id="CLU_033058_3_1_0"/>
<dbReference type="InParanoid" id="Q9RT21"/>
<dbReference type="OrthoDB" id="9767721at2"/>
<dbReference type="EvolutionaryTrace" id="Q9RT21"/>
<dbReference type="Proteomes" id="UP000002524">
    <property type="component" value="Chromosome 1"/>
</dbReference>
<dbReference type="GO" id="GO:0005737">
    <property type="term" value="C:cytoplasm"/>
    <property type="evidence" value="ECO:0007669"/>
    <property type="project" value="UniProtKB-SubCell"/>
</dbReference>
<dbReference type="GO" id="GO:0003755">
    <property type="term" value="F:peptidyl-prolyl cis-trans isomerase activity"/>
    <property type="evidence" value="ECO:0000318"/>
    <property type="project" value="GO_Central"/>
</dbReference>
<dbReference type="GO" id="GO:0044183">
    <property type="term" value="F:protein folding chaperone"/>
    <property type="evidence" value="ECO:0000318"/>
    <property type="project" value="GO_Central"/>
</dbReference>
<dbReference type="GO" id="GO:0043022">
    <property type="term" value="F:ribosome binding"/>
    <property type="evidence" value="ECO:0000318"/>
    <property type="project" value="GO_Central"/>
</dbReference>
<dbReference type="GO" id="GO:0019843">
    <property type="term" value="F:rRNA binding"/>
    <property type="evidence" value="ECO:0007669"/>
    <property type="project" value="UniProtKB-KW"/>
</dbReference>
<dbReference type="GO" id="GO:0051083">
    <property type="term" value="P:'de novo' cotranslational protein folding"/>
    <property type="evidence" value="ECO:0000318"/>
    <property type="project" value="GO_Central"/>
</dbReference>
<dbReference type="GO" id="GO:0051301">
    <property type="term" value="P:cell division"/>
    <property type="evidence" value="ECO:0007669"/>
    <property type="project" value="UniProtKB-KW"/>
</dbReference>
<dbReference type="GO" id="GO:0061077">
    <property type="term" value="P:chaperone-mediated protein folding"/>
    <property type="evidence" value="ECO:0000318"/>
    <property type="project" value="GO_Central"/>
</dbReference>
<dbReference type="GO" id="GO:0015031">
    <property type="term" value="P:protein transport"/>
    <property type="evidence" value="ECO:0007669"/>
    <property type="project" value="UniProtKB-UniRule"/>
</dbReference>
<dbReference type="GO" id="GO:0043335">
    <property type="term" value="P:protein unfolding"/>
    <property type="evidence" value="ECO:0000318"/>
    <property type="project" value="GO_Central"/>
</dbReference>
<dbReference type="Gene3D" id="3.10.50.40">
    <property type="match status" value="1"/>
</dbReference>
<dbReference type="Gene3D" id="3.30.70.1050">
    <property type="entry name" value="Trigger factor ribosome-binding domain"/>
    <property type="match status" value="1"/>
</dbReference>
<dbReference type="Gene3D" id="1.10.3120.10">
    <property type="entry name" value="Trigger factor, C-terminal domain"/>
    <property type="match status" value="1"/>
</dbReference>
<dbReference type="HAMAP" id="MF_00303">
    <property type="entry name" value="Trigger_factor_Tig"/>
    <property type="match status" value="1"/>
</dbReference>
<dbReference type="InterPro" id="IPR046357">
    <property type="entry name" value="PPIase_dom_sf"/>
</dbReference>
<dbReference type="InterPro" id="IPR005215">
    <property type="entry name" value="Trig_fac"/>
</dbReference>
<dbReference type="InterPro" id="IPR008880">
    <property type="entry name" value="Trigger_fac_C"/>
</dbReference>
<dbReference type="InterPro" id="IPR037041">
    <property type="entry name" value="Trigger_fac_C_sf"/>
</dbReference>
<dbReference type="InterPro" id="IPR008881">
    <property type="entry name" value="Trigger_fac_ribosome-bd_bac"/>
</dbReference>
<dbReference type="InterPro" id="IPR036611">
    <property type="entry name" value="Trigger_fac_ribosome-bd_sf"/>
</dbReference>
<dbReference type="InterPro" id="IPR027304">
    <property type="entry name" value="Trigger_fact/SurA_dom_sf"/>
</dbReference>
<dbReference type="NCBIfam" id="TIGR00115">
    <property type="entry name" value="tig"/>
    <property type="match status" value="1"/>
</dbReference>
<dbReference type="PANTHER" id="PTHR30560">
    <property type="entry name" value="TRIGGER FACTOR CHAPERONE AND PEPTIDYL-PROLYL CIS/TRANS ISOMERASE"/>
    <property type="match status" value="1"/>
</dbReference>
<dbReference type="PANTHER" id="PTHR30560:SF3">
    <property type="entry name" value="TRIGGER FACTOR-LIKE PROTEIN TIG, CHLOROPLASTIC"/>
    <property type="match status" value="1"/>
</dbReference>
<dbReference type="Pfam" id="PF05698">
    <property type="entry name" value="Trigger_C"/>
    <property type="match status" value="1"/>
</dbReference>
<dbReference type="Pfam" id="PF05697">
    <property type="entry name" value="Trigger_N"/>
    <property type="match status" value="1"/>
</dbReference>
<dbReference type="PIRSF" id="PIRSF003095">
    <property type="entry name" value="Trigger_factor"/>
    <property type="match status" value="1"/>
</dbReference>
<dbReference type="SUPFAM" id="SSF54534">
    <property type="entry name" value="FKBP-like"/>
    <property type="match status" value="1"/>
</dbReference>
<dbReference type="SUPFAM" id="SSF109998">
    <property type="entry name" value="Triger factor/SurA peptide-binding domain-like"/>
    <property type="match status" value="1"/>
</dbReference>
<dbReference type="SUPFAM" id="SSF102735">
    <property type="entry name" value="Trigger factor ribosome-binding domain"/>
    <property type="match status" value="1"/>
</dbReference>